<organism>
    <name type="scientific">Mycobacterium marinum (strain ATCC BAA-535 / M)</name>
    <dbReference type="NCBI Taxonomy" id="216594"/>
    <lineage>
        <taxon>Bacteria</taxon>
        <taxon>Bacillati</taxon>
        <taxon>Actinomycetota</taxon>
        <taxon>Actinomycetes</taxon>
        <taxon>Mycobacteriales</taxon>
        <taxon>Mycobacteriaceae</taxon>
        <taxon>Mycobacterium</taxon>
        <taxon>Mycobacterium ulcerans group</taxon>
    </lineage>
</organism>
<feature type="chain" id="PRO_1000118493" description="1-deoxy-D-xylulose 5-phosphate reductoisomerase">
    <location>
        <begin position="1"/>
        <end position="402"/>
    </location>
</feature>
<feature type="binding site" evidence="1">
    <location>
        <position position="21"/>
    </location>
    <ligand>
        <name>NADPH</name>
        <dbReference type="ChEBI" id="CHEBI:57783"/>
    </ligand>
</feature>
<feature type="binding site" evidence="1">
    <location>
        <position position="22"/>
    </location>
    <ligand>
        <name>NADPH</name>
        <dbReference type="ChEBI" id="CHEBI:57783"/>
    </ligand>
</feature>
<feature type="binding site" evidence="1">
    <location>
        <position position="23"/>
    </location>
    <ligand>
        <name>NADPH</name>
        <dbReference type="ChEBI" id="CHEBI:57783"/>
    </ligand>
</feature>
<feature type="binding site" evidence="1">
    <location>
        <position position="24"/>
    </location>
    <ligand>
        <name>NADPH</name>
        <dbReference type="ChEBI" id="CHEBI:57783"/>
    </ligand>
</feature>
<feature type="binding site" evidence="1">
    <location>
        <position position="47"/>
    </location>
    <ligand>
        <name>NADPH</name>
        <dbReference type="ChEBI" id="CHEBI:57783"/>
    </ligand>
</feature>
<feature type="binding site" evidence="1">
    <location>
        <position position="50"/>
    </location>
    <ligand>
        <name>NADPH</name>
        <dbReference type="ChEBI" id="CHEBI:57783"/>
    </ligand>
</feature>
<feature type="binding site" evidence="1">
    <location>
        <position position="127"/>
    </location>
    <ligand>
        <name>NADPH</name>
        <dbReference type="ChEBI" id="CHEBI:57783"/>
    </ligand>
</feature>
<feature type="binding site" evidence="1">
    <location>
        <position position="128"/>
    </location>
    <ligand>
        <name>1-deoxy-D-xylulose 5-phosphate</name>
        <dbReference type="ChEBI" id="CHEBI:57792"/>
    </ligand>
</feature>
<feature type="binding site" evidence="1">
    <location>
        <position position="129"/>
    </location>
    <ligand>
        <name>NADPH</name>
        <dbReference type="ChEBI" id="CHEBI:57783"/>
    </ligand>
</feature>
<feature type="binding site" evidence="1">
    <location>
        <position position="151"/>
    </location>
    <ligand>
        <name>Mn(2+)</name>
        <dbReference type="ChEBI" id="CHEBI:29035"/>
    </ligand>
</feature>
<feature type="binding site" evidence="1">
    <location>
        <position position="152"/>
    </location>
    <ligand>
        <name>1-deoxy-D-xylulose 5-phosphate</name>
        <dbReference type="ChEBI" id="CHEBI:57792"/>
    </ligand>
</feature>
<feature type="binding site" evidence="1">
    <location>
        <position position="153"/>
    </location>
    <ligand>
        <name>1-deoxy-D-xylulose 5-phosphate</name>
        <dbReference type="ChEBI" id="CHEBI:57792"/>
    </ligand>
</feature>
<feature type="binding site" evidence="1">
    <location>
        <position position="153"/>
    </location>
    <ligand>
        <name>Mn(2+)</name>
        <dbReference type="ChEBI" id="CHEBI:29035"/>
    </ligand>
</feature>
<feature type="binding site" evidence="1">
    <location>
        <position position="177"/>
    </location>
    <ligand>
        <name>1-deoxy-D-xylulose 5-phosphate</name>
        <dbReference type="ChEBI" id="CHEBI:57792"/>
    </ligand>
</feature>
<feature type="binding site" evidence="1">
    <location>
        <position position="200"/>
    </location>
    <ligand>
        <name>1-deoxy-D-xylulose 5-phosphate</name>
        <dbReference type="ChEBI" id="CHEBI:57792"/>
    </ligand>
</feature>
<feature type="binding site" evidence="1">
    <location>
        <position position="206"/>
    </location>
    <ligand>
        <name>NADPH</name>
        <dbReference type="ChEBI" id="CHEBI:57783"/>
    </ligand>
</feature>
<feature type="binding site" evidence="1">
    <location>
        <position position="213"/>
    </location>
    <ligand>
        <name>1-deoxy-D-xylulose 5-phosphate</name>
        <dbReference type="ChEBI" id="CHEBI:57792"/>
    </ligand>
</feature>
<feature type="binding site" evidence="1">
    <location>
        <position position="218"/>
    </location>
    <ligand>
        <name>1-deoxy-D-xylulose 5-phosphate</name>
        <dbReference type="ChEBI" id="CHEBI:57792"/>
    </ligand>
</feature>
<feature type="binding site" evidence="1">
    <location>
        <position position="219"/>
    </location>
    <ligand>
        <name>1-deoxy-D-xylulose 5-phosphate</name>
        <dbReference type="ChEBI" id="CHEBI:57792"/>
    </ligand>
</feature>
<feature type="binding site" evidence="1">
    <location>
        <position position="222"/>
    </location>
    <ligand>
        <name>1-deoxy-D-xylulose 5-phosphate</name>
        <dbReference type="ChEBI" id="CHEBI:57792"/>
    </ligand>
</feature>
<feature type="binding site" evidence="1">
    <location>
        <position position="222"/>
    </location>
    <ligand>
        <name>Mn(2+)</name>
        <dbReference type="ChEBI" id="CHEBI:29035"/>
    </ligand>
</feature>
<comment type="function">
    <text evidence="1">Catalyzes the NADPH-dependent rearrangement and reduction of 1-deoxy-D-xylulose-5-phosphate (DXP) to 2-C-methyl-D-erythritol 4-phosphate (MEP).</text>
</comment>
<comment type="catalytic activity">
    <reaction evidence="1">
        <text>2-C-methyl-D-erythritol 4-phosphate + NADP(+) = 1-deoxy-D-xylulose 5-phosphate + NADPH + H(+)</text>
        <dbReference type="Rhea" id="RHEA:13717"/>
        <dbReference type="ChEBI" id="CHEBI:15378"/>
        <dbReference type="ChEBI" id="CHEBI:57783"/>
        <dbReference type="ChEBI" id="CHEBI:57792"/>
        <dbReference type="ChEBI" id="CHEBI:58262"/>
        <dbReference type="ChEBI" id="CHEBI:58349"/>
        <dbReference type="EC" id="1.1.1.267"/>
    </reaction>
    <physiologicalReaction direction="right-to-left" evidence="1">
        <dbReference type="Rhea" id="RHEA:13719"/>
    </physiologicalReaction>
</comment>
<comment type="cofactor">
    <cofactor evidence="1">
        <name>Mg(2+)</name>
        <dbReference type="ChEBI" id="CHEBI:18420"/>
    </cofactor>
    <cofactor evidence="1">
        <name>Mn(2+)</name>
        <dbReference type="ChEBI" id="CHEBI:29035"/>
    </cofactor>
</comment>
<comment type="pathway">
    <text evidence="1">Isoprenoid biosynthesis; isopentenyl diphosphate biosynthesis via DXP pathway; isopentenyl diphosphate from 1-deoxy-D-xylulose 5-phosphate: step 1/6.</text>
</comment>
<comment type="similarity">
    <text evidence="1">Belongs to the DXR family.</text>
</comment>
<accession>B2HJP9</accession>
<dbReference type="EC" id="1.1.1.267" evidence="1"/>
<dbReference type="EMBL" id="CP000854">
    <property type="protein sequence ID" value="ACC40285.1"/>
    <property type="molecule type" value="Genomic_DNA"/>
</dbReference>
<dbReference type="RefSeq" id="WP_012393634.1">
    <property type="nucleotide sequence ID" value="NC_010612.1"/>
</dbReference>
<dbReference type="SMR" id="B2HJP9"/>
<dbReference type="STRING" id="216594.MMAR_1836"/>
<dbReference type="KEGG" id="mmi:MMAR_1836"/>
<dbReference type="eggNOG" id="COG0743">
    <property type="taxonomic scope" value="Bacteria"/>
</dbReference>
<dbReference type="HOGENOM" id="CLU_035714_4_0_11"/>
<dbReference type="OrthoDB" id="9806546at2"/>
<dbReference type="UniPathway" id="UPA00056">
    <property type="reaction ID" value="UER00092"/>
</dbReference>
<dbReference type="Proteomes" id="UP000001190">
    <property type="component" value="Chromosome"/>
</dbReference>
<dbReference type="GO" id="GO:0030604">
    <property type="term" value="F:1-deoxy-D-xylulose-5-phosphate reductoisomerase activity"/>
    <property type="evidence" value="ECO:0007669"/>
    <property type="project" value="UniProtKB-UniRule"/>
</dbReference>
<dbReference type="GO" id="GO:0030145">
    <property type="term" value="F:manganese ion binding"/>
    <property type="evidence" value="ECO:0007669"/>
    <property type="project" value="TreeGrafter"/>
</dbReference>
<dbReference type="GO" id="GO:0070402">
    <property type="term" value="F:NADPH binding"/>
    <property type="evidence" value="ECO:0007669"/>
    <property type="project" value="InterPro"/>
</dbReference>
<dbReference type="GO" id="GO:0051484">
    <property type="term" value="P:isopentenyl diphosphate biosynthetic process, methylerythritol 4-phosphate pathway involved in terpenoid biosynthetic process"/>
    <property type="evidence" value="ECO:0007669"/>
    <property type="project" value="TreeGrafter"/>
</dbReference>
<dbReference type="FunFam" id="3.40.50.720:FF:000045">
    <property type="entry name" value="1-deoxy-D-xylulose 5-phosphate reductoisomerase"/>
    <property type="match status" value="1"/>
</dbReference>
<dbReference type="Gene3D" id="1.10.1740.10">
    <property type="match status" value="1"/>
</dbReference>
<dbReference type="Gene3D" id="3.40.50.720">
    <property type="entry name" value="NAD(P)-binding Rossmann-like Domain"/>
    <property type="match status" value="1"/>
</dbReference>
<dbReference type="HAMAP" id="MF_00183">
    <property type="entry name" value="DXP_reductoisom"/>
    <property type="match status" value="1"/>
</dbReference>
<dbReference type="InterPro" id="IPR003821">
    <property type="entry name" value="DXP_reductoisomerase"/>
</dbReference>
<dbReference type="InterPro" id="IPR013644">
    <property type="entry name" value="DXP_reductoisomerase_C"/>
</dbReference>
<dbReference type="InterPro" id="IPR013512">
    <property type="entry name" value="DXP_reductoisomerase_N"/>
</dbReference>
<dbReference type="InterPro" id="IPR026877">
    <property type="entry name" value="DXPR_C"/>
</dbReference>
<dbReference type="InterPro" id="IPR036169">
    <property type="entry name" value="DXPR_C_sf"/>
</dbReference>
<dbReference type="InterPro" id="IPR036291">
    <property type="entry name" value="NAD(P)-bd_dom_sf"/>
</dbReference>
<dbReference type="NCBIfam" id="TIGR00243">
    <property type="entry name" value="Dxr"/>
    <property type="match status" value="1"/>
</dbReference>
<dbReference type="PANTHER" id="PTHR30525">
    <property type="entry name" value="1-DEOXY-D-XYLULOSE 5-PHOSPHATE REDUCTOISOMERASE"/>
    <property type="match status" value="1"/>
</dbReference>
<dbReference type="PANTHER" id="PTHR30525:SF0">
    <property type="entry name" value="1-DEOXY-D-XYLULOSE 5-PHOSPHATE REDUCTOISOMERASE, CHLOROPLASTIC"/>
    <property type="match status" value="1"/>
</dbReference>
<dbReference type="Pfam" id="PF08436">
    <property type="entry name" value="DXP_redisom_C"/>
    <property type="match status" value="1"/>
</dbReference>
<dbReference type="Pfam" id="PF02670">
    <property type="entry name" value="DXP_reductoisom"/>
    <property type="match status" value="1"/>
</dbReference>
<dbReference type="Pfam" id="PF13288">
    <property type="entry name" value="DXPR_C"/>
    <property type="match status" value="1"/>
</dbReference>
<dbReference type="PIRSF" id="PIRSF006205">
    <property type="entry name" value="Dxp_reductismrs"/>
    <property type="match status" value="1"/>
</dbReference>
<dbReference type="SUPFAM" id="SSF69055">
    <property type="entry name" value="1-deoxy-D-xylulose-5-phosphate reductoisomerase, C-terminal domain"/>
    <property type="match status" value="1"/>
</dbReference>
<dbReference type="SUPFAM" id="SSF55347">
    <property type="entry name" value="Glyceraldehyde-3-phosphate dehydrogenase-like, C-terminal domain"/>
    <property type="match status" value="1"/>
</dbReference>
<dbReference type="SUPFAM" id="SSF51735">
    <property type="entry name" value="NAD(P)-binding Rossmann-fold domains"/>
    <property type="match status" value="1"/>
</dbReference>
<evidence type="ECO:0000255" key="1">
    <source>
        <dbReference type="HAMAP-Rule" id="MF_00183"/>
    </source>
</evidence>
<gene>
    <name evidence="1" type="primary">dxr</name>
    <name type="ordered locus">MMAR_1836</name>
</gene>
<keyword id="KW-0414">Isoprene biosynthesis</keyword>
<keyword id="KW-0464">Manganese</keyword>
<keyword id="KW-0479">Metal-binding</keyword>
<keyword id="KW-0521">NADP</keyword>
<keyword id="KW-0560">Oxidoreductase</keyword>
<keyword id="KW-1185">Reference proteome</keyword>
<name>DXR_MYCMM</name>
<protein>
    <recommendedName>
        <fullName evidence="1">1-deoxy-D-xylulose 5-phosphate reductoisomerase</fullName>
        <shortName evidence="1">DXP reductoisomerase</shortName>
        <ecNumber evidence="1">1.1.1.267</ecNumber>
    </recommendedName>
    <alternativeName>
        <fullName evidence="1">1-deoxyxylulose-5-phosphate reductoisomerase</fullName>
    </alternativeName>
    <alternativeName>
        <fullName evidence="1">2-C-methyl-D-erythritol 4-phosphate synthase</fullName>
    </alternativeName>
</protein>
<reference key="1">
    <citation type="journal article" date="2008" name="Genome Res.">
        <title>Insights from the complete genome sequence of Mycobacterium marinum on the evolution of Mycobacterium tuberculosis.</title>
        <authorList>
            <person name="Stinear T.P."/>
            <person name="Seemann T."/>
            <person name="Harrison P.F."/>
            <person name="Jenkin G.A."/>
            <person name="Davies J.K."/>
            <person name="Johnson P.D."/>
            <person name="Abdellah Z."/>
            <person name="Arrowsmith C."/>
            <person name="Chillingworth T."/>
            <person name="Churcher C."/>
            <person name="Clarke K."/>
            <person name="Cronin A."/>
            <person name="Davis P."/>
            <person name="Goodhead I."/>
            <person name="Holroyd N."/>
            <person name="Jagels K."/>
            <person name="Lord A."/>
            <person name="Moule S."/>
            <person name="Mungall K."/>
            <person name="Norbertczak H."/>
            <person name="Quail M.A."/>
            <person name="Rabbinowitsch E."/>
            <person name="Walker D."/>
            <person name="White B."/>
            <person name="Whitehead S."/>
            <person name="Small P.L."/>
            <person name="Brosch R."/>
            <person name="Ramakrishnan L."/>
            <person name="Fischbach M.A."/>
            <person name="Parkhill J."/>
            <person name="Cole S.T."/>
        </authorList>
    </citation>
    <scope>NUCLEOTIDE SEQUENCE [LARGE SCALE GENOMIC DNA]</scope>
    <source>
        <strain>ATCC BAA-535 / M</strain>
    </source>
</reference>
<sequence>MTTATDGSADGRLRVLVLGSTGSIGTQALEVIAANPDRFEVVGLAAGGSNLDTLLRQRAETGVTEIAIADERAAQLAGDIAYQGPDAVTRLVEETEADVVLNALVGALGLRPTLAALASGARLALANKESLVAGGPLVLQAAQPGQIVPVDSEHSALAQCLRAGTPDEVAKLVLTASGGPFRGWSAADLQEVTPEQAGAHPTWSMGPMNTLNSASLVNKGLELIETHLLFGIPYERIEVVVHPQSIVHSMVTFVDGSTIAQASPPDMKLPISLALGWPRRVPGAARYCDFSQAQTWEFEPLDDEVFPAVELARHAGETGGCMTAVYNAANEEAAAAFLAGRISFPAIVGTIADVLHAADQWAVSPANVDDVLDAQRWARQRAQRAIAKASPAGACEKVSGLA</sequence>
<proteinExistence type="inferred from homology"/>